<reference key="1">
    <citation type="journal article" date="2003" name="Nature">
        <title>The genome of a motile marine Synechococcus.</title>
        <authorList>
            <person name="Palenik B."/>
            <person name="Brahamsha B."/>
            <person name="Larimer F.W."/>
            <person name="Land M.L."/>
            <person name="Hauser L."/>
            <person name="Chain P."/>
            <person name="Lamerdin J.E."/>
            <person name="Regala W."/>
            <person name="Allen E.E."/>
            <person name="McCarren J."/>
            <person name="Paulsen I.T."/>
            <person name="Dufresne A."/>
            <person name="Partensky F."/>
            <person name="Webb E.A."/>
            <person name="Waterbury J."/>
        </authorList>
    </citation>
    <scope>NUCLEOTIDE SEQUENCE [LARGE SCALE GENOMIC DNA]</scope>
    <source>
        <strain>WH8102</strain>
    </source>
</reference>
<reference key="2">
    <citation type="journal article" date="2006" name="Arch. Microbiol.">
        <title>Identification of glycine betaine as compatible solute in Synechococcus sp. WH8102 and characterization of its N-methyltransferase genes involved in betaine synthesis.</title>
        <authorList>
            <person name="Lu W.D."/>
            <person name="Chi Z.M."/>
            <person name="Su C.D."/>
        </authorList>
    </citation>
    <scope>FUNCTION IN BETAINE BIOSYNTHESIS</scope>
    <scope>CATALYTIC ACTIVITY</scope>
    <scope>SUBSTRATE SPECIFICITY</scope>
    <scope>BIOPHYSICOCHEMICAL PROPERTIES</scope>
    <scope>SUBUNIT</scope>
</reference>
<protein>
    <recommendedName>
        <fullName>Dimethylglycine N-methyltransferase</fullName>
        <ecNumber evidence="1">2.1.1.161</ecNumber>
    </recommendedName>
    <alternativeName>
        <fullName evidence="2">Betaine synthesis N-methyltransferase B</fullName>
    </alternativeName>
</protein>
<evidence type="ECO:0000269" key="1">
    <source>
    </source>
</evidence>
<evidence type="ECO:0000303" key="2">
    <source>
    </source>
</evidence>
<evidence type="ECO:0000305" key="3"/>
<evidence type="ECO:0000305" key="4">
    <source>
    </source>
</evidence>
<keyword id="KW-0489">Methyltransferase</keyword>
<keyword id="KW-0949">S-adenosyl-L-methionine</keyword>
<keyword id="KW-0808">Transferase</keyword>
<name>SDMT_PARMW</name>
<comment type="function">
    <text evidence="1">Catalyzes the methylation of dimethylglycine to betaine with S-adenosylmethionine (AdoMet) acting as the methyl donor. It has strict specificity for dimethylglycine as the methyl group acceptors.</text>
</comment>
<comment type="catalytic activity">
    <reaction evidence="1">
        <text>N,N-dimethylglycine + S-adenosyl-L-methionine = glycine betaine + S-adenosyl-L-homocysteine + H(+)</text>
        <dbReference type="Rhea" id="RHEA:10072"/>
        <dbReference type="ChEBI" id="CHEBI:15378"/>
        <dbReference type="ChEBI" id="CHEBI:17750"/>
        <dbReference type="ChEBI" id="CHEBI:57856"/>
        <dbReference type="ChEBI" id="CHEBI:58251"/>
        <dbReference type="ChEBI" id="CHEBI:59789"/>
        <dbReference type="EC" id="2.1.1.161"/>
    </reaction>
    <physiologicalReaction direction="left-to-right" evidence="1">
        <dbReference type="Rhea" id="RHEA:10073"/>
    </physiologicalReaction>
</comment>
<comment type="biophysicochemical properties">
    <kinetics>
        <KM evidence="1">2.11 mM for dimethylglycine (at pH 8.5 and at 37 degrees Celsius)</KM>
        <KM evidence="1">0.41 mM for AdoMet (at pH 8.5 and at 37 degrees Celsius)</KM>
        <Vmax evidence="1">1.06 umol/min/mg enzyme with AdoMet as substrate (at pH 8.5 and at 37 degrees Celsius)</Vmax>
        <Vmax evidence="1">1.18 umol/min/mg enzyme with dimethylglycine as substrate (at pH 8.5 and at 37 degrees)</Vmax>
    </kinetics>
    <phDependence>
        <text evidence="1">Optimum pH is around 8.5 for dimethylglycine.</text>
    </phDependence>
</comment>
<comment type="pathway">
    <text evidence="4">Amine and polyamine biosynthesis; betaine biosynthesis via glycine pathway; betaine from glycine: step 3/3.</text>
</comment>
<comment type="subunit">
    <text evidence="1">Monomer.</text>
</comment>
<comment type="similarity">
    <text evidence="3">Belongs to the methyltransferase superfamily.</text>
</comment>
<organism>
    <name type="scientific">Parasynechococcus marenigrum (strain WH8102)</name>
    <dbReference type="NCBI Taxonomy" id="84588"/>
    <lineage>
        <taxon>Bacteria</taxon>
        <taxon>Bacillati</taxon>
        <taxon>Cyanobacteriota</taxon>
        <taxon>Cyanophyceae</taxon>
        <taxon>Synechococcales</taxon>
        <taxon>Prochlorococcaceae</taxon>
        <taxon>Parasynechococcus</taxon>
        <taxon>Parasynechococcus marenigrum</taxon>
    </lineage>
</organism>
<gene>
    <name evidence="2" type="primary">bsmB</name>
    <name type="synonym">sdmt</name>
    <name type="ordered locus">SYNW1913</name>
</gene>
<feature type="chain" id="PRO_0000413615" description="Dimethylglycine N-methyltransferase">
    <location>
        <begin position="1"/>
        <end position="280"/>
    </location>
</feature>
<accession>Q7U4Z9</accession>
<sequence>MGTTNGCAADSVAATYYDSQDADQFYEQVWGGEDIHIGLYATPDEAIATASDRTVHALLDLADPLPQGGCVVDLGAGYGGASRRLARWSERPVHAINISAVENDRHRRLNVDAGLEQQITVHDASFEQVPMADASADLVWSQDAILHAGDRAKVLAEVSRLLKPGGCFVFTDPMAADGVEMGLLQPILDRIHLPDLASPSRYKAWGEAVGLTMEVWDERTEMLVRHYDRVRQDTRLRRAELETSISSGYLDRMDVGLGHWVDGGQQGRLSWGLMRLRKPG</sequence>
<proteinExistence type="evidence at protein level"/>
<dbReference type="EC" id="2.1.1.161" evidence="1"/>
<dbReference type="EMBL" id="BX569694">
    <property type="protein sequence ID" value="CAE08428.1"/>
    <property type="molecule type" value="Genomic_DNA"/>
</dbReference>
<dbReference type="RefSeq" id="WP_011128771.1">
    <property type="nucleotide sequence ID" value="NC_005070.1"/>
</dbReference>
<dbReference type="SMR" id="Q7U4Z9"/>
<dbReference type="STRING" id="84588.SYNW1913"/>
<dbReference type="KEGG" id="syw:SYNW1913"/>
<dbReference type="eggNOG" id="COG2230">
    <property type="taxonomic scope" value="Bacteria"/>
</dbReference>
<dbReference type="HOGENOM" id="CLU_039068_6_2_3"/>
<dbReference type="BRENDA" id="2.1.1.161">
    <property type="organism ID" value="9130"/>
</dbReference>
<dbReference type="UniPathway" id="UPA00530">
    <property type="reaction ID" value="UER00383"/>
</dbReference>
<dbReference type="Proteomes" id="UP000001422">
    <property type="component" value="Chromosome"/>
</dbReference>
<dbReference type="GO" id="GO:0052729">
    <property type="term" value="F:dimethylglycine N-methyltransferase activity"/>
    <property type="evidence" value="ECO:0000314"/>
    <property type="project" value="UniProtKB"/>
</dbReference>
<dbReference type="GO" id="GO:0019286">
    <property type="term" value="P:glycine betaine biosynthetic process from glycine"/>
    <property type="evidence" value="ECO:0000314"/>
    <property type="project" value="UniProtKB"/>
</dbReference>
<dbReference type="GO" id="GO:0032259">
    <property type="term" value="P:methylation"/>
    <property type="evidence" value="ECO:0007669"/>
    <property type="project" value="UniProtKB-KW"/>
</dbReference>
<dbReference type="CDD" id="cd02440">
    <property type="entry name" value="AdoMet_MTases"/>
    <property type="match status" value="1"/>
</dbReference>
<dbReference type="FunFam" id="3.40.50.150:FF:000461">
    <property type="entry name" value="Sarcosine/dimethylglycine N-methyltransferase"/>
    <property type="match status" value="1"/>
</dbReference>
<dbReference type="Gene3D" id="3.40.50.150">
    <property type="entry name" value="Vaccinia Virus protein VP39"/>
    <property type="match status" value="1"/>
</dbReference>
<dbReference type="InterPro" id="IPR050447">
    <property type="entry name" value="Erg6_SMT_methyltransf"/>
</dbReference>
<dbReference type="InterPro" id="IPR013216">
    <property type="entry name" value="Methyltransf_11"/>
</dbReference>
<dbReference type="InterPro" id="IPR029063">
    <property type="entry name" value="SAM-dependent_MTases_sf"/>
</dbReference>
<dbReference type="PANTHER" id="PTHR44068:SF11">
    <property type="entry name" value="GERANYL DIPHOSPHATE 2-C-METHYLTRANSFERASE"/>
    <property type="match status" value="1"/>
</dbReference>
<dbReference type="PANTHER" id="PTHR44068">
    <property type="entry name" value="ZGC:194242"/>
    <property type="match status" value="1"/>
</dbReference>
<dbReference type="Pfam" id="PF08241">
    <property type="entry name" value="Methyltransf_11"/>
    <property type="match status" value="1"/>
</dbReference>
<dbReference type="SUPFAM" id="SSF53335">
    <property type="entry name" value="S-adenosyl-L-methionine-dependent methyltransferases"/>
    <property type="match status" value="1"/>
</dbReference>